<protein>
    <recommendedName>
        <fullName>Calcium-regulated heat-stable protein 1</fullName>
    </recommendedName>
    <alternativeName>
        <fullName>Calcium-regulated heat-stable protein of 24 kDa</fullName>
        <shortName>CRHSP-24</shortName>
    </alternativeName>
</protein>
<comment type="function">
    <text evidence="4 5">Binds mRNA and regulates the stability of target mRNA. Binds single-stranded DNA (in vitro).</text>
</comment>
<comment type="subunit">
    <text evidence="1">Homodimer. Interacts with STYX (By similarity).</text>
</comment>
<comment type="interaction">
    <interactant intactId="EBI-718719">
        <id>Q9Y2V2</id>
    </interactant>
    <interactant intactId="EBI-357530">
        <id>Q9ULX6</id>
        <label>AKAP8L</label>
    </interactant>
    <organismsDiffer>false</organismsDiffer>
    <experiments>3</experiments>
</comment>
<comment type="interaction">
    <interactant intactId="EBI-718719">
        <id>Q9Y2V2</id>
    </interactant>
    <interactant intactId="EBI-3867333">
        <id>A8MQ03</id>
        <label>CYSRT1</label>
    </interactant>
    <organismsDiffer>false</organismsDiffer>
    <experiments>3</experiments>
</comment>
<comment type="interaction">
    <interactant intactId="EBI-718719">
        <id>Q9Y2V2</id>
    </interactant>
    <interactant intactId="EBI-2548605">
        <id>Q8NF50</id>
        <label>DOCK8</label>
    </interactant>
    <organismsDiffer>false</organismsDiffer>
    <experiments>3</experiments>
</comment>
<comment type="interaction">
    <interactant intactId="EBI-718719">
        <id>Q9Y2V2</id>
    </interactant>
    <interactant intactId="EBI-10174653">
        <id>Q8NF50-2</id>
        <label>DOCK8</label>
    </interactant>
    <organismsDiffer>false</organismsDiffer>
    <experiments>3</experiments>
</comment>
<comment type="interaction">
    <interactant intactId="EBI-718719">
        <id>Q9Y2V2</id>
    </interactant>
    <interactant intactId="EBI-739467">
        <id>Q9H8Y8</id>
        <label>GORASP2</label>
    </interactant>
    <organismsDiffer>false</organismsDiffer>
    <experiments>3</experiments>
</comment>
<comment type="interaction">
    <interactant intactId="EBI-718719">
        <id>Q9Y2V2</id>
    </interactant>
    <interactant intactId="EBI-10172290">
        <id>P60409</id>
        <label>KRTAP10-7</label>
    </interactant>
    <organismsDiffer>false</organismsDiffer>
    <experiments>3</experiments>
</comment>
<comment type="interaction">
    <interactant intactId="EBI-718719">
        <id>Q9Y2V2</id>
    </interactant>
    <interactant intactId="EBI-10171774">
        <id>P60410</id>
        <label>KRTAP10-8</label>
    </interactant>
    <organismsDiffer>false</organismsDiffer>
    <experiments>6</experiments>
</comment>
<comment type="interaction">
    <interactant intactId="EBI-718719">
        <id>Q9Y2V2</id>
    </interactant>
    <interactant intactId="EBI-22311199">
        <id>Q3LI67</id>
        <label>KRTAP6-3</label>
    </interactant>
    <organismsDiffer>false</organismsDiffer>
    <experiments>3</experiments>
</comment>
<comment type="interaction">
    <interactant intactId="EBI-718719">
        <id>Q9Y2V2</id>
    </interactant>
    <interactant intactId="EBI-10172526">
        <id>Q9UJV3-2</id>
        <label>MID2</label>
    </interactant>
    <organismsDiffer>false</organismsDiffer>
    <experiments>3</experiments>
</comment>
<comment type="interaction">
    <interactant intactId="EBI-718719">
        <id>Q9Y2V2</id>
    </interactant>
    <interactant intactId="EBI-945833">
        <id>Q7Z3S9</id>
        <label>NOTCH2NLA</label>
    </interactant>
    <organismsDiffer>false</organismsDiffer>
    <experiments>3</experiments>
</comment>
<comment type="interaction">
    <interactant intactId="EBI-718719">
        <id>Q9Y2V2</id>
    </interactant>
    <interactant intactId="EBI-22310682">
        <id>P0DPK4</id>
        <label>NOTCH2NLC</label>
    </interactant>
    <organismsDiffer>false</organismsDiffer>
    <experiments>3</experiments>
</comment>
<comment type="interaction">
    <interactant intactId="EBI-718719">
        <id>Q9Y2V2</id>
    </interactant>
    <interactant intactId="EBI-302345">
        <id>Q8ND90</id>
        <label>PNMA1</label>
    </interactant>
    <organismsDiffer>false</organismsDiffer>
    <experiments>3</experiments>
</comment>
<comment type="interaction">
    <interactant intactId="EBI-718719">
        <id>Q9Y2V2</id>
    </interactant>
    <interactant intactId="EBI-302388">
        <id>P30153</id>
        <label>PPP2R1A</label>
    </interactant>
    <organismsDiffer>false</organismsDiffer>
    <experiments>3</experiments>
</comment>
<comment type="interaction">
    <interactant intactId="EBI-718719">
        <id>Q9Y2V2</id>
    </interactant>
    <interactant intactId="EBI-359224">
        <id>Q13077</id>
        <label>TRAF1</label>
    </interactant>
    <organismsDiffer>false</organismsDiffer>
    <experiments>3</experiments>
</comment>
<comment type="subcellular location">
    <subcellularLocation>
        <location evidence="5">Cytoplasm</location>
    </subcellularLocation>
    <subcellularLocation>
        <location evidence="5">Cytoplasm</location>
        <location evidence="5">P-body</location>
    </subcellularLocation>
    <subcellularLocation>
        <location evidence="5">Cytoplasmic granule</location>
    </subcellularLocation>
    <text evidence="1">Detected at cytoplasmic stress granules and P-bodies. Detected at exosome granules where mRNA is degraded (By similarity).</text>
</comment>
<comment type="PTM">
    <text evidence="1 3">Dephosphorylated by calcineurin in a Ca(2+) dependent manner (By similarity). Can be phosphorylated by DYRK2 (in vitro).</text>
</comment>
<proteinExistence type="evidence at protein level"/>
<sequence length="147" mass="15892">MSSEPPPPPQPPTHQASVGLLDTPRSRERSPSPLRGNVVPSPLPTRRTRTFSATVRASQGPVYKGVCKCFCRSKGHGFITPADGGPDIFLHISDVEGEYVPVEGDEVTYKMCSIPPKNEKLQAVEVVITHLAPGTKHETWSGHVISS</sequence>
<keyword id="KW-0002">3D-structure</keyword>
<keyword id="KW-0007">Acetylation</keyword>
<keyword id="KW-0963">Cytoplasm</keyword>
<keyword id="KW-0597">Phosphoprotein</keyword>
<keyword id="KW-1267">Proteomics identification</keyword>
<keyword id="KW-1185">Reference proteome</keyword>
<keyword id="KW-0694">RNA-binding</keyword>
<organism>
    <name type="scientific">Homo sapiens</name>
    <name type="common">Human</name>
    <dbReference type="NCBI Taxonomy" id="9606"/>
    <lineage>
        <taxon>Eukaryota</taxon>
        <taxon>Metazoa</taxon>
        <taxon>Chordata</taxon>
        <taxon>Craniata</taxon>
        <taxon>Vertebrata</taxon>
        <taxon>Euteleostomi</taxon>
        <taxon>Mammalia</taxon>
        <taxon>Eutheria</taxon>
        <taxon>Euarchontoglires</taxon>
        <taxon>Primates</taxon>
        <taxon>Haplorrhini</taxon>
        <taxon>Catarrhini</taxon>
        <taxon>Hominidae</taxon>
        <taxon>Homo</taxon>
    </lineage>
</organism>
<feature type="initiator methionine" description="Removed" evidence="9 11">
    <location>
        <position position="1"/>
    </location>
</feature>
<feature type="chain" id="PRO_0000100230" description="Calcium-regulated heat-stable protein 1">
    <location>
        <begin position="2"/>
        <end position="147"/>
    </location>
</feature>
<feature type="domain" description="CSD">
    <location>
        <begin position="62"/>
        <end position="129"/>
    </location>
</feature>
<feature type="region of interest" description="Disordered" evidence="2">
    <location>
        <begin position="1"/>
        <end position="52"/>
    </location>
</feature>
<feature type="compositionally biased region" description="Pro residues" evidence="2">
    <location>
        <begin position="1"/>
        <end position="12"/>
    </location>
</feature>
<feature type="modified residue" description="N-acetylserine" evidence="9 11">
    <location>
        <position position="2"/>
    </location>
</feature>
<feature type="modified residue" description="Phosphoserine" evidence="3 8 12 13">
    <location>
        <position position="30"/>
    </location>
</feature>
<feature type="modified residue" description="Phosphoserine" evidence="3 8 12 13">
    <location>
        <position position="32"/>
    </location>
</feature>
<feature type="modified residue" description="Phosphoserine" evidence="3 7 8 10 11 12 13">
    <location>
        <position position="41"/>
    </location>
</feature>
<feature type="modified residue" description="Phosphothreonine" evidence="11">
    <location>
        <position position="45"/>
    </location>
</feature>
<feature type="modified residue" description="Phosphoserine" evidence="3 8 10 11 12 13">
    <location>
        <position position="52"/>
    </location>
</feature>
<feature type="modified residue" description="Phosphoserine" evidence="12">
    <location>
        <position position="58"/>
    </location>
</feature>
<feature type="modified residue" description="Phosphoserine" evidence="8">
    <location>
        <position position="146"/>
    </location>
</feature>
<feature type="modified residue" description="Phosphoserine" evidence="8">
    <location>
        <position position="147"/>
    </location>
</feature>
<feature type="mutagenesis site" description="Reduced affinity for single-stranded DNA. Abolishes location at cytoplasmic stress granules." evidence="5">
    <original>S</original>
    <variation>D</variation>
    <location>
        <position position="41"/>
    </location>
</feature>
<feature type="mutagenesis site" description="Reduced affinity for single-stranded DNA." evidence="5">
    <original>H</original>
    <variation>Q</variation>
    <location>
        <position position="76"/>
    </location>
</feature>
<feature type="sequence conflict" description="In Ref. 1; AAD25021." evidence="6" ref="1">
    <original>G</original>
    <variation>V</variation>
    <location>
        <position position="60"/>
    </location>
</feature>
<feature type="helix" evidence="14">
    <location>
        <begin position="51"/>
        <end position="59"/>
    </location>
</feature>
<feature type="strand" evidence="14">
    <location>
        <begin position="63"/>
        <end position="70"/>
    </location>
</feature>
<feature type="turn" evidence="14">
    <location>
        <begin position="72"/>
        <end position="74"/>
    </location>
</feature>
<feature type="strand" evidence="14">
    <location>
        <begin position="75"/>
        <end position="84"/>
    </location>
</feature>
<feature type="strand" evidence="14">
    <location>
        <begin position="88"/>
        <end position="91"/>
    </location>
</feature>
<feature type="helix" evidence="14">
    <location>
        <begin position="92"/>
        <end position="94"/>
    </location>
</feature>
<feature type="strand" evidence="14">
    <location>
        <begin position="95"/>
        <end position="99"/>
    </location>
</feature>
<feature type="strand" evidence="14">
    <location>
        <begin position="106"/>
        <end position="113"/>
    </location>
</feature>
<feature type="strand" evidence="14">
    <location>
        <begin position="121"/>
        <end position="130"/>
    </location>
</feature>
<feature type="strand" evidence="14">
    <location>
        <begin position="133"/>
        <end position="135"/>
    </location>
</feature>
<reference key="1">
    <citation type="journal article" date="1998" name="J. Biol. Chem.">
        <title>Purification and characterization of a novel physiological substrate for calcineurin in mammalian cells.</title>
        <authorList>
            <person name="Groblewski G.E."/>
            <person name="Yoshida M."/>
            <person name="Bragado M.J."/>
            <person name="Ernst S.A."/>
            <person name="Leykam J."/>
            <person name="Williams J.A."/>
        </authorList>
    </citation>
    <scope>NUCLEOTIDE SEQUENCE [MRNA]</scope>
    <source>
        <tissue>Placenta</tissue>
    </source>
</reference>
<reference key="2">
    <citation type="journal article" date="2004" name="Nat. Genet.">
        <title>Complete sequencing and characterization of 21,243 full-length human cDNAs.</title>
        <authorList>
            <person name="Ota T."/>
            <person name="Suzuki Y."/>
            <person name="Nishikawa T."/>
            <person name="Otsuki T."/>
            <person name="Sugiyama T."/>
            <person name="Irie R."/>
            <person name="Wakamatsu A."/>
            <person name="Hayashi K."/>
            <person name="Sato H."/>
            <person name="Nagai K."/>
            <person name="Kimura K."/>
            <person name="Makita H."/>
            <person name="Sekine M."/>
            <person name="Obayashi M."/>
            <person name="Nishi T."/>
            <person name="Shibahara T."/>
            <person name="Tanaka T."/>
            <person name="Ishii S."/>
            <person name="Yamamoto J."/>
            <person name="Saito K."/>
            <person name="Kawai Y."/>
            <person name="Isono Y."/>
            <person name="Nakamura Y."/>
            <person name="Nagahari K."/>
            <person name="Murakami K."/>
            <person name="Yasuda T."/>
            <person name="Iwayanagi T."/>
            <person name="Wagatsuma M."/>
            <person name="Shiratori A."/>
            <person name="Sudo H."/>
            <person name="Hosoiri T."/>
            <person name="Kaku Y."/>
            <person name="Kodaira H."/>
            <person name="Kondo H."/>
            <person name="Sugawara M."/>
            <person name="Takahashi M."/>
            <person name="Kanda K."/>
            <person name="Yokoi T."/>
            <person name="Furuya T."/>
            <person name="Kikkawa E."/>
            <person name="Omura Y."/>
            <person name="Abe K."/>
            <person name="Kamihara K."/>
            <person name="Katsuta N."/>
            <person name="Sato K."/>
            <person name="Tanikawa M."/>
            <person name="Yamazaki M."/>
            <person name="Ninomiya K."/>
            <person name="Ishibashi T."/>
            <person name="Yamashita H."/>
            <person name="Murakawa K."/>
            <person name="Fujimori K."/>
            <person name="Tanai H."/>
            <person name="Kimata M."/>
            <person name="Watanabe M."/>
            <person name="Hiraoka S."/>
            <person name="Chiba Y."/>
            <person name="Ishida S."/>
            <person name="Ono Y."/>
            <person name="Takiguchi S."/>
            <person name="Watanabe S."/>
            <person name="Yosida M."/>
            <person name="Hotuta T."/>
            <person name="Kusano J."/>
            <person name="Kanehori K."/>
            <person name="Takahashi-Fujii A."/>
            <person name="Hara H."/>
            <person name="Tanase T.-O."/>
            <person name="Nomura Y."/>
            <person name="Togiya S."/>
            <person name="Komai F."/>
            <person name="Hara R."/>
            <person name="Takeuchi K."/>
            <person name="Arita M."/>
            <person name="Imose N."/>
            <person name="Musashino K."/>
            <person name="Yuuki H."/>
            <person name="Oshima A."/>
            <person name="Sasaki N."/>
            <person name="Aotsuka S."/>
            <person name="Yoshikawa Y."/>
            <person name="Matsunawa H."/>
            <person name="Ichihara T."/>
            <person name="Shiohata N."/>
            <person name="Sano S."/>
            <person name="Moriya S."/>
            <person name="Momiyama H."/>
            <person name="Satoh N."/>
            <person name="Takami S."/>
            <person name="Terashima Y."/>
            <person name="Suzuki O."/>
            <person name="Nakagawa S."/>
            <person name="Senoh A."/>
            <person name="Mizoguchi H."/>
            <person name="Goto Y."/>
            <person name="Shimizu F."/>
            <person name="Wakebe H."/>
            <person name="Hishigaki H."/>
            <person name="Watanabe T."/>
            <person name="Sugiyama A."/>
            <person name="Takemoto M."/>
            <person name="Kawakami B."/>
            <person name="Yamazaki M."/>
            <person name="Watanabe K."/>
            <person name="Kumagai A."/>
            <person name="Itakura S."/>
            <person name="Fukuzumi Y."/>
            <person name="Fujimori Y."/>
            <person name="Komiyama M."/>
            <person name="Tashiro H."/>
            <person name="Tanigami A."/>
            <person name="Fujiwara T."/>
            <person name="Ono T."/>
            <person name="Yamada K."/>
            <person name="Fujii Y."/>
            <person name="Ozaki K."/>
            <person name="Hirao M."/>
            <person name="Ohmori Y."/>
            <person name="Kawabata A."/>
            <person name="Hikiji T."/>
            <person name="Kobatake N."/>
            <person name="Inagaki H."/>
            <person name="Ikema Y."/>
            <person name="Okamoto S."/>
            <person name="Okitani R."/>
            <person name="Kawakami T."/>
            <person name="Noguchi S."/>
            <person name="Itoh T."/>
            <person name="Shigeta K."/>
            <person name="Senba T."/>
            <person name="Matsumura K."/>
            <person name="Nakajima Y."/>
            <person name="Mizuno T."/>
            <person name="Morinaga M."/>
            <person name="Sasaki M."/>
            <person name="Togashi T."/>
            <person name="Oyama M."/>
            <person name="Hata H."/>
            <person name="Watanabe M."/>
            <person name="Komatsu T."/>
            <person name="Mizushima-Sugano J."/>
            <person name="Satoh T."/>
            <person name="Shirai Y."/>
            <person name="Takahashi Y."/>
            <person name="Nakagawa K."/>
            <person name="Okumura K."/>
            <person name="Nagase T."/>
            <person name="Nomura N."/>
            <person name="Kikuchi H."/>
            <person name="Masuho Y."/>
            <person name="Yamashita R."/>
            <person name="Nakai K."/>
            <person name="Yada T."/>
            <person name="Nakamura Y."/>
            <person name="Ohara O."/>
            <person name="Isogai T."/>
            <person name="Sugano S."/>
        </authorList>
    </citation>
    <scope>NUCLEOTIDE SEQUENCE [LARGE SCALE MRNA]</scope>
    <source>
        <tissue>Brain</tissue>
    </source>
</reference>
<reference key="3">
    <citation type="submission" date="2005-09" db="EMBL/GenBank/DDBJ databases">
        <authorList>
            <person name="Mural R.J."/>
            <person name="Istrail S."/>
            <person name="Sutton G.G."/>
            <person name="Florea L."/>
            <person name="Halpern A.L."/>
            <person name="Mobarry C.M."/>
            <person name="Lippert R."/>
            <person name="Walenz B."/>
            <person name="Shatkay H."/>
            <person name="Dew I."/>
            <person name="Miller J.R."/>
            <person name="Flanigan M.J."/>
            <person name="Edwards N.J."/>
            <person name="Bolanos R."/>
            <person name="Fasulo D."/>
            <person name="Halldorsson B.V."/>
            <person name="Hannenhalli S."/>
            <person name="Turner R."/>
            <person name="Yooseph S."/>
            <person name="Lu F."/>
            <person name="Nusskern D.R."/>
            <person name="Shue B.C."/>
            <person name="Zheng X.H."/>
            <person name="Zhong F."/>
            <person name="Delcher A.L."/>
            <person name="Huson D.H."/>
            <person name="Kravitz S.A."/>
            <person name="Mouchard L."/>
            <person name="Reinert K."/>
            <person name="Remington K.A."/>
            <person name="Clark A.G."/>
            <person name="Waterman M.S."/>
            <person name="Eichler E.E."/>
            <person name="Adams M.D."/>
            <person name="Hunkapiller M.W."/>
            <person name="Myers E.W."/>
            <person name="Venter J.C."/>
        </authorList>
    </citation>
    <scope>NUCLEOTIDE SEQUENCE [LARGE SCALE GENOMIC DNA]</scope>
</reference>
<reference key="4">
    <citation type="journal article" date="2004" name="Genome Res.">
        <title>The status, quality, and expansion of the NIH full-length cDNA project: the Mammalian Gene Collection (MGC).</title>
        <authorList>
            <consortium name="The MGC Project Team"/>
        </authorList>
    </citation>
    <scope>NUCLEOTIDE SEQUENCE [LARGE SCALE MRNA]</scope>
    <source>
        <tissue>Placenta</tissue>
        <tissue>Prostate</tissue>
    </source>
</reference>
<reference key="5">
    <citation type="journal article" date="2003" name="Nature">
        <title>Proteomic characterization of the human centrosome by protein correlation profiling.</title>
        <authorList>
            <person name="Andersen J.S."/>
            <person name="Wilkinson C.J."/>
            <person name="Mayor T."/>
            <person name="Mortensen P."/>
            <person name="Nigg E.A."/>
            <person name="Mann M."/>
        </authorList>
    </citation>
    <scope>IDENTIFICATION BY MASS SPECTROMETRY</scope>
    <source>
        <tissue>Lymphoblast</tissue>
    </source>
</reference>
<reference key="6">
    <citation type="journal article" date="2005" name="Biochem. J.">
        <title>Identification of calcium-regulated heat-stable protein of 24 kDa (CRHSP24) as a physiological substrate for PKB and RSK using KESTREL.</title>
        <authorList>
            <person name="Auld G.C."/>
            <person name="Campbell D.G."/>
            <person name="Morrice N."/>
            <person name="Cohen P."/>
        </authorList>
    </citation>
    <scope>PHOSPHORYLATION AT SER-30; SER-32; SER-41 AND SER-52</scope>
</reference>
<reference key="7">
    <citation type="journal article" date="2008" name="J. Proteome Res.">
        <title>Combining protein-based IMAC, peptide-based IMAC, and MudPIT for efficient phosphoproteomic analysis.</title>
        <authorList>
            <person name="Cantin G.T."/>
            <person name="Yi W."/>
            <person name="Lu B."/>
            <person name="Park S.K."/>
            <person name="Xu T."/>
            <person name="Lee J.-D."/>
            <person name="Yates J.R. III"/>
        </authorList>
    </citation>
    <scope>IDENTIFICATION BY MASS SPECTROMETRY [LARGE SCALE ANALYSIS]</scope>
    <source>
        <tissue>Cervix carcinoma</tissue>
    </source>
</reference>
<reference key="8">
    <citation type="journal article" date="2008" name="J. Proteome Res.">
        <title>Phosphoproteome of resting human platelets.</title>
        <authorList>
            <person name="Zahedi R.P."/>
            <person name="Lewandrowski U."/>
            <person name="Wiesner J."/>
            <person name="Wortelkamp S."/>
            <person name="Moebius J."/>
            <person name="Schuetz C."/>
            <person name="Walter U."/>
            <person name="Gambaryan S."/>
            <person name="Sickmann A."/>
        </authorList>
    </citation>
    <scope>PHOSPHORYLATION [LARGE SCALE ANALYSIS] AT SER-41</scope>
    <scope>IDENTIFICATION BY MASS SPECTROMETRY [LARGE SCALE ANALYSIS]</scope>
    <source>
        <tissue>Platelet</tissue>
    </source>
</reference>
<reference key="9">
    <citation type="journal article" date="2008" name="Proc. Natl. Acad. Sci. U.S.A.">
        <title>A quantitative atlas of mitotic phosphorylation.</title>
        <authorList>
            <person name="Dephoure N."/>
            <person name="Zhou C."/>
            <person name="Villen J."/>
            <person name="Beausoleil S.A."/>
            <person name="Bakalarski C.E."/>
            <person name="Elledge S.J."/>
            <person name="Gygi S.P."/>
        </authorList>
    </citation>
    <scope>PHOSPHORYLATION [LARGE SCALE ANALYSIS] AT SER-30; SER-32; SER-41; SER-52; SER-146 AND SER-147</scope>
    <scope>IDENTIFICATION BY MASS SPECTROMETRY [LARGE SCALE ANALYSIS]</scope>
    <source>
        <tissue>Cervix carcinoma</tissue>
    </source>
</reference>
<reference key="10">
    <citation type="journal article" date="2009" name="Anal. Chem.">
        <title>Lys-N and trypsin cover complementary parts of the phosphoproteome in a refined SCX-based approach.</title>
        <authorList>
            <person name="Gauci S."/>
            <person name="Helbig A.O."/>
            <person name="Slijper M."/>
            <person name="Krijgsveld J."/>
            <person name="Heck A.J."/>
            <person name="Mohammed S."/>
        </authorList>
    </citation>
    <scope>ACETYLATION [LARGE SCALE ANALYSIS] AT SER-2</scope>
    <scope>CLEAVAGE OF INITIATOR METHIONINE [LARGE SCALE ANALYSIS]</scope>
    <scope>IDENTIFICATION BY MASS SPECTROMETRY [LARGE SCALE ANALYSIS]</scope>
</reference>
<reference key="11">
    <citation type="journal article" date="2010" name="Sci. Signal.">
        <title>Quantitative phosphoproteomics reveals widespread full phosphorylation site occupancy during mitosis.</title>
        <authorList>
            <person name="Olsen J.V."/>
            <person name="Vermeulen M."/>
            <person name="Santamaria A."/>
            <person name="Kumar C."/>
            <person name="Miller M.L."/>
            <person name="Jensen L.J."/>
            <person name="Gnad F."/>
            <person name="Cox J."/>
            <person name="Jensen T.S."/>
            <person name="Nigg E.A."/>
            <person name="Brunak S."/>
            <person name="Mann M."/>
        </authorList>
    </citation>
    <scope>PHOSPHORYLATION [LARGE SCALE ANALYSIS] AT SER-41 AND SER-52</scope>
    <scope>IDENTIFICATION BY MASS SPECTROMETRY [LARGE SCALE ANALYSIS]</scope>
    <source>
        <tissue>Cervix carcinoma</tissue>
    </source>
</reference>
<reference key="12">
    <citation type="journal article" date="2011" name="BMC Syst. Biol.">
        <title>Initial characterization of the human central proteome.</title>
        <authorList>
            <person name="Burkard T.R."/>
            <person name="Planyavsky M."/>
            <person name="Kaupe I."/>
            <person name="Breitwieser F.P."/>
            <person name="Buerckstuemmer T."/>
            <person name="Bennett K.L."/>
            <person name="Superti-Furga G."/>
            <person name="Colinge J."/>
        </authorList>
    </citation>
    <scope>IDENTIFICATION BY MASS SPECTROMETRY [LARGE SCALE ANALYSIS]</scope>
</reference>
<reference key="13">
    <citation type="journal article" date="2011" name="Mol. Cell. Biol.">
        <title>CARHSP1 is required for effective tumor necrosis factor alpha mRNA stabilization and localizes to processing bodies and exosomes.</title>
        <authorList>
            <person name="Pfeiffer J.R."/>
            <person name="McAvoy B.L."/>
            <person name="Fecteau R.E."/>
            <person name="Deleault K.M."/>
            <person name="Brooks S.A."/>
        </authorList>
    </citation>
    <scope>FUNCTION</scope>
    <scope>RNA-BINDING</scope>
    <scope>IDENTIFICATION BY MASS SPECTROMETRY</scope>
</reference>
<reference key="14">
    <citation type="journal article" date="2011" name="Sci. Signal.">
        <title>System-wide temporal characterization of the proteome and phosphoproteome of human embryonic stem cell differentiation.</title>
        <authorList>
            <person name="Rigbolt K.T."/>
            <person name="Prokhorova T.A."/>
            <person name="Akimov V."/>
            <person name="Henningsen J."/>
            <person name="Johansen P.T."/>
            <person name="Kratchmarova I."/>
            <person name="Kassem M."/>
            <person name="Mann M."/>
            <person name="Olsen J.V."/>
            <person name="Blagoev B."/>
        </authorList>
    </citation>
    <scope>ACETYLATION [LARGE SCALE ANALYSIS] AT SER-2</scope>
    <scope>PHOSPHORYLATION [LARGE SCALE ANALYSIS] AT SER-41; THR-45 AND SER-52</scope>
    <scope>CLEAVAGE OF INITIATOR METHIONINE [LARGE SCALE ANALYSIS]</scope>
    <scope>IDENTIFICATION BY MASS SPECTROMETRY [LARGE SCALE ANALYSIS]</scope>
</reference>
<reference key="15">
    <citation type="journal article" date="2013" name="J. Proteome Res.">
        <title>Toward a comprehensive characterization of a human cancer cell phosphoproteome.</title>
        <authorList>
            <person name="Zhou H."/>
            <person name="Di Palma S."/>
            <person name="Preisinger C."/>
            <person name="Peng M."/>
            <person name="Polat A.N."/>
            <person name="Heck A.J."/>
            <person name="Mohammed S."/>
        </authorList>
    </citation>
    <scope>PHOSPHORYLATION [LARGE SCALE ANALYSIS] AT SER-30; SER-32; SER-41; SER-52 AND SER-58</scope>
    <scope>IDENTIFICATION BY MASS SPECTROMETRY [LARGE SCALE ANALYSIS]</scope>
    <source>
        <tissue>Cervix carcinoma</tissue>
        <tissue>Erythroleukemia</tissue>
    </source>
</reference>
<reference key="16">
    <citation type="journal article" date="2014" name="J. Proteomics">
        <title>An enzyme assisted RP-RPLC approach for in-depth analysis of human liver phosphoproteome.</title>
        <authorList>
            <person name="Bian Y."/>
            <person name="Song C."/>
            <person name="Cheng K."/>
            <person name="Dong M."/>
            <person name="Wang F."/>
            <person name="Huang J."/>
            <person name="Sun D."/>
            <person name="Wang L."/>
            <person name="Ye M."/>
            <person name="Zou H."/>
        </authorList>
    </citation>
    <scope>PHOSPHORYLATION [LARGE SCALE ANALYSIS] AT SER-30; SER-32; SER-41 AND SER-52</scope>
    <scope>IDENTIFICATION BY MASS SPECTROMETRY [LARGE SCALE ANALYSIS]</scope>
    <source>
        <tissue>Liver</tissue>
    </source>
</reference>
<reference key="17">
    <citation type="journal article" date="2011" name="J. Biol. Chem.">
        <title>Structure-functional analyses of CRHSP-24 plasticity and dynamics in oxidative stress response.</title>
        <authorList>
            <person name="Hou H."/>
            <person name="Wang F."/>
            <person name="Zhang W."/>
            <person name="Wang D."/>
            <person name="Li X."/>
            <person name="Bartlam M."/>
            <person name="Shen Y."/>
            <person name="Yao X."/>
            <person name="Rao Z."/>
        </authorList>
    </citation>
    <scope>X-RAY CRYSTALLOGRAPHY (2.8 ANGSTROMS)</scope>
    <scope>SUBUNIT</scope>
    <scope>FUNCTION</scope>
    <scope>SUBCELLULAR LOCATION</scope>
    <scope>DNA-BINDING</scope>
    <scope>MUTAGENESIS OF SER-41 AND HIS-76</scope>
</reference>
<gene>
    <name type="primary">CARHSP1</name>
</gene>
<evidence type="ECO:0000250" key="1"/>
<evidence type="ECO:0000256" key="2">
    <source>
        <dbReference type="SAM" id="MobiDB-lite"/>
    </source>
</evidence>
<evidence type="ECO:0000269" key="3">
    <source>
    </source>
</evidence>
<evidence type="ECO:0000269" key="4">
    <source>
    </source>
</evidence>
<evidence type="ECO:0000269" key="5">
    <source>
    </source>
</evidence>
<evidence type="ECO:0000305" key="6"/>
<evidence type="ECO:0007744" key="7">
    <source>
    </source>
</evidence>
<evidence type="ECO:0007744" key="8">
    <source>
    </source>
</evidence>
<evidence type="ECO:0007744" key="9">
    <source>
    </source>
</evidence>
<evidence type="ECO:0007744" key="10">
    <source>
    </source>
</evidence>
<evidence type="ECO:0007744" key="11">
    <source>
    </source>
</evidence>
<evidence type="ECO:0007744" key="12">
    <source>
    </source>
</evidence>
<evidence type="ECO:0007744" key="13">
    <source>
    </source>
</evidence>
<evidence type="ECO:0007829" key="14">
    <source>
        <dbReference type="PDB" id="3AQQ"/>
    </source>
</evidence>
<dbReference type="EMBL" id="AF115345">
    <property type="protein sequence ID" value="AAD25021.1"/>
    <property type="molecule type" value="mRNA"/>
</dbReference>
<dbReference type="EMBL" id="AK311777">
    <property type="protein sequence ID" value="BAG34720.1"/>
    <property type="molecule type" value="mRNA"/>
</dbReference>
<dbReference type="EMBL" id="CH471112">
    <property type="protein sequence ID" value="EAW85196.1"/>
    <property type="molecule type" value="Genomic_DNA"/>
</dbReference>
<dbReference type="EMBL" id="CH471112">
    <property type="protein sequence ID" value="EAW85197.1"/>
    <property type="molecule type" value="Genomic_DNA"/>
</dbReference>
<dbReference type="EMBL" id="CH471112">
    <property type="protein sequence ID" value="EAW85198.1"/>
    <property type="molecule type" value="Genomic_DNA"/>
</dbReference>
<dbReference type="EMBL" id="CH471112">
    <property type="protein sequence ID" value="EAW85199.1"/>
    <property type="molecule type" value="Genomic_DNA"/>
</dbReference>
<dbReference type="EMBL" id="BC003366">
    <property type="protein sequence ID" value="AAH03366.1"/>
    <property type="molecule type" value="mRNA"/>
</dbReference>
<dbReference type="EMBL" id="BC108283">
    <property type="protein sequence ID" value="AAI08284.1"/>
    <property type="molecule type" value="mRNA"/>
</dbReference>
<dbReference type="CCDS" id="CCDS10537.1"/>
<dbReference type="RefSeq" id="NP_001035941.1">
    <property type="nucleotide sequence ID" value="NM_001042476.2"/>
</dbReference>
<dbReference type="RefSeq" id="NP_001265189.1">
    <property type="nucleotide sequence ID" value="NM_001278260.2"/>
</dbReference>
<dbReference type="RefSeq" id="NP_001265190.1">
    <property type="nucleotide sequence ID" value="NM_001278261.2"/>
</dbReference>
<dbReference type="RefSeq" id="NP_001265191.1">
    <property type="nucleotide sequence ID" value="NM_001278262.2"/>
</dbReference>
<dbReference type="RefSeq" id="NP_001265192.1">
    <property type="nucleotide sequence ID" value="NM_001278263.1"/>
</dbReference>
<dbReference type="RefSeq" id="NP_001265193.1">
    <property type="nucleotide sequence ID" value="NM_001278264.2"/>
</dbReference>
<dbReference type="RefSeq" id="NP_001265194.1">
    <property type="nucleotide sequence ID" value="NM_001278265.2"/>
</dbReference>
<dbReference type="RefSeq" id="NP_001265195.1">
    <property type="nucleotide sequence ID" value="NM_001278266.2"/>
</dbReference>
<dbReference type="RefSeq" id="NP_055131.2">
    <property type="nucleotide sequence ID" value="NM_014316.4"/>
</dbReference>
<dbReference type="RefSeq" id="XP_005255286.1">
    <property type="nucleotide sequence ID" value="XM_005255229.4"/>
</dbReference>
<dbReference type="RefSeq" id="XP_011520746.1">
    <property type="nucleotide sequence ID" value="XM_011522444.3"/>
</dbReference>
<dbReference type="RefSeq" id="XP_047289840.1">
    <property type="nucleotide sequence ID" value="XM_047433884.1"/>
</dbReference>
<dbReference type="RefSeq" id="XP_047289841.1">
    <property type="nucleotide sequence ID" value="XM_047433885.1"/>
</dbReference>
<dbReference type="RefSeq" id="XP_047289842.1">
    <property type="nucleotide sequence ID" value="XM_047433886.1"/>
</dbReference>
<dbReference type="RefSeq" id="XP_054235955.1">
    <property type="nucleotide sequence ID" value="XM_054379980.1"/>
</dbReference>
<dbReference type="RefSeq" id="XP_054235956.1">
    <property type="nucleotide sequence ID" value="XM_054379981.1"/>
</dbReference>
<dbReference type="RefSeq" id="XP_054235957.1">
    <property type="nucleotide sequence ID" value="XM_054379982.1"/>
</dbReference>
<dbReference type="RefSeq" id="XP_054235958.1">
    <property type="nucleotide sequence ID" value="XM_054379983.1"/>
</dbReference>
<dbReference type="PDB" id="3AQQ">
    <property type="method" value="X-ray"/>
    <property type="resolution" value="2.80 A"/>
    <property type="chains" value="A/B/C/D=1-147"/>
</dbReference>
<dbReference type="PDBsum" id="3AQQ"/>
<dbReference type="SMR" id="Q9Y2V2"/>
<dbReference type="BioGRID" id="117124">
    <property type="interactions" value="58"/>
</dbReference>
<dbReference type="FunCoup" id="Q9Y2V2">
    <property type="interactions" value="874"/>
</dbReference>
<dbReference type="IntAct" id="Q9Y2V2">
    <property type="interactions" value="26"/>
</dbReference>
<dbReference type="MINT" id="Q9Y2V2"/>
<dbReference type="STRING" id="9606.ENSP00000379838"/>
<dbReference type="GlyGen" id="Q9Y2V2">
    <property type="glycosylation" value="1 site, 1 O-linked glycan (1 site)"/>
</dbReference>
<dbReference type="iPTMnet" id="Q9Y2V2"/>
<dbReference type="PhosphoSitePlus" id="Q9Y2V2"/>
<dbReference type="BioMuta" id="CARHSP1"/>
<dbReference type="DMDM" id="41016932"/>
<dbReference type="jPOST" id="Q9Y2V2"/>
<dbReference type="MassIVE" id="Q9Y2V2"/>
<dbReference type="PaxDb" id="9606-ENSP00000379838"/>
<dbReference type="PeptideAtlas" id="Q9Y2V2"/>
<dbReference type="ProteomicsDB" id="85909"/>
<dbReference type="Pumba" id="Q9Y2V2"/>
<dbReference type="TopDownProteomics" id="Q9Y2V2"/>
<dbReference type="Antibodypedia" id="24559">
    <property type="antibodies" value="78 antibodies from 22 providers"/>
</dbReference>
<dbReference type="DNASU" id="23589"/>
<dbReference type="Ensembl" id="ENST00000311052.10">
    <property type="protein sequence ID" value="ENSP00000311847.4"/>
    <property type="gene ID" value="ENSG00000153048.11"/>
</dbReference>
<dbReference type="Ensembl" id="ENST00000396593.6">
    <property type="protein sequence ID" value="ENSP00000379838.2"/>
    <property type="gene ID" value="ENSG00000153048.11"/>
</dbReference>
<dbReference type="Ensembl" id="ENST00000561530.5">
    <property type="protein sequence ID" value="ENSP00000455284.1"/>
    <property type="gene ID" value="ENSG00000153048.11"/>
</dbReference>
<dbReference type="Ensembl" id="ENST00000567554.5">
    <property type="protein sequence ID" value="ENSP00000455855.1"/>
    <property type="gene ID" value="ENSG00000153048.11"/>
</dbReference>
<dbReference type="Ensembl" id="ENST00000610831.4">
    <property type="protein sequence ID" value="ENSP00000478055.1"/>
    <property type="gene ID" value="ENSG00000153048.11"/>
</dbReference>
<dbReference type="Ensembl" id="ENST00000611932.4">
    <property type="protein sequence ID" value="ENSP00000481550.1"/>
    <property type="gene ID" value="ENSG00000153048.11"/>
</dbReference>
<dbReference type="Ensembl" id="ENST00000614449.4">
    <property type="protein sequence ID" value="ENSP00000480542.1"/>
    <property type="gene ID" value="ENSG00000153048.11"/>
</dbReference>
<dbReference type="Ensembl" id="ENST00000618335.4">
    <property type="protein sequence ID" value="ENSP00000483591.1"/>
    <property type="gene ID" value="ENSG00000153048.11"/>
</dbReference>
<dbReference type="Ensembl" id="ENST00000619881.4">
    <property type="protein sequence ID" value="ENSP00000480144.1"/>
    <property type="gene ID" value="ENSG00000153048.11"/>
</dbReference>
<dbReference type="GeneID" id="23589"/>
<dbReference type="KEGG" id="hsa:23589"/>
<dbReference type="MANE-Select" id="ENST00000311052.10">
    <property type="protein sequence ID" value="ENSP00000311847.4"/>
    <property type="RefSeq nucleotide sequence ID" value="NM_014316.4"/>
    <property type="RefSeq protein sequence ID" value="NP_055131.2"/>
</dbReference>
<dbReference type="UCSC" id="uc002czh.2">
    <property type="organism name" value="human"/>
</dbReference>
<dbReference type="AGR" id="HGNC:17150"/>
<dbReference type="CTD" id="23589"/>
<dbReference type="DisGeNET" id="23589"/>
<dbReference type="GeneCards" id="CARHSP1"/>
<dbReference type="HGNC" id="HGNC:17150">
    <property type="gene designation" value="CARHSP1"/>
</dbReference>
<dbReference type="HPA" id="ENSG00000153048">
    <property type="expression patterns" value="Tissue enhanced (testis)"/>
</dbReference>
<dbReference type="MIM" id="616885">
    <property type="type" value="gene"/>
</dbReference>
<dbReference type="neXtProt" id="NX_Q9Y2V2"/>
<dbReference type="OpenTargets" id="ENSG00000153048"/>
<dbReference type="PharmGKB" id="PA38440"/>
<dbReference type="VEuPathDB" id="HostDB:ENSG00000153048"/>
<dbReference type="eggNOG" id="KOG3070">
    <property type="taxonomic scope" value="Eukaryota"/>
</dbReference>
<dbReference type="GeneTree" id="ENSGT00390000000022"/>
<dbReference type="HOGENOM" id="CLU_139526_1_0_1"/>
<dbReference type="InParanoid" id="Q9Y2V2"/>
<dbReference type="OMA" id="YRGVCKC"/>
<dbReference type="OrthoDB" id="448492at2759"/>
<dbReference type="PAN-GO" id="Q9Y2V2">
    <property type="GO annotations" value="3 GO annotations based on evolutionary models"/>
</dbReference>
<dbReference type="PhylomeDB" id="Q9Y2V2"/>
<dbReference type="TreeFam" id="TF324381"/>
<dbReference type="PathwayCommons" id="Q9Y2V2"/>
<dbReference type="SignaLink" id="Q9Y2V2"/>
<dbReference type="SIGNOR" id="Q9Y2V2"/>
<dbReference type="BioGRID-ORCS" id="23589">
    <property type="hits" value="12 hits in 1173 CRISPR screens"/>
</dbReference>
<dbReference type="CD-CODE" id="232F8A39">
    <property type="entry name" value="P-body"/>
</dbReference>
<dbReference type="CD-CODE" id="DEE660B4">
    <property type="entry name" value="Stress granule"/>
</dbReference>
<dbReference type="ChiTaRS" id="CARHSP1">
    <property type="organism name" value="human"/>
</dbReference>
<dbReference type="EvolutionaryTrace" id="Q9Y2V2"/>
<dbReference type="GeneWiki" id="CARHSP1"/>
<dbReference type="GenomeRNAi" id="23589"/>
<dbReference type="Pharos" id="Q9Y2V2">
    <property type="development level" value="Tbio"/>
</dbReference>
<dbReference type="PRO" id="PR:Q9Y2V2"/>
<dbReference type="Proteomes" id="UP000005640">
    <property type="component" value="Chromosome 16"/>
</dbReference>
<dbReference type="RNAct" id="Q9Y2V2">
    <property type="molecule type" value="protein"/>
</dbReference>
<dbReference type="Bgee" id="ENSG00000153048">
    <property type="expression patterns" value="Expressed in right testis and 201 other cell types or tissues"/>
</dbReference>
<dbReference type="ExpressionAtlas" id="Q9Y2V2">
    <property type="expression patterns" value="baseline and differential"/>
</dbReference>
<dbReference type="GO" id="GO:0005737">
    <property type="term" value="C:cytoplasm"/>
    <property type="evidence" value="ECO:0000318"/>
    <property type="project" value="GO_Central"/>
</dbReference>
<dbReference type="GO" id="GO:0000177">
    <property type="term" value="C:cytoplasmic exosome (RNase complex)"/>
    <property type="evidence" value="ECO:0007669"/>
    <property type="project" value="Ensembl"/>
</dbReference>
<dbReference type="GO" id="GO:0005829">
    <property type="term" value="C:cytosol"/>
    <property type="evidence" value="ECO:0000250"/>
    <property type="project" value="UniProtKB"/>
</dbReference>
<dbReference type="GO" id="GO:0043186">
    <property type="term" value="C:P granule"/>
    <property type="evidence" value="ECO:0000250"/>
    <property type="project" value="UniProtKB"/>
</dbReference>
<dbReference type="GO" id="GO:0000932">
    <property type="term" value="C:P-body"/>
    <property type="evidence" value="ECO:0007669"/>
    <property type="project" value="UniProtKB-SubCell"/>
</dbReference>
<dbReference type="GO" id="GO:0003730">
    <property type="term" value="F:mRNA 3'-UTR binding"/>
    <property type="evidence" value="ECO:0000314"/>
    <property type="project" value="UniProtKB"/>
</dbReference>
<dbReference type="GO" id="GO:0019902">
    <property type="term" value="F:phosphatase binding"/>
    <property type="evidence" value="ECO:0000303"/>
    <property type="project" value="UniProtKB"/>
</dbReference>
<dbReference type="GO" id="GO:0035556">
    <property type="term" value="P:intracellular signal transduction"/>
    <property type="evidence" value="ECO:0000304"/>
    <property type="project" value="ProtInc"/>
</dbReference>
<dbReference type="GO" id="GO:0043488">
    <property type="term" value="P:regulation of mRNA stability"/>
    <property type="evidence" value="ECO:0000250"/>
    <property type="project" value="UniProtKB"/>
</dbReference>
<dbReference type="CDD" id="cd04458">
    <property type="entry name" value="CSP_CDS"/>
    <property type="match status" value="1"/>
</dbReference>
<dbReference type="FunFam" id="2.40.50.140:FF:000086">
    <property type="entry name" value="Cold shock domain-containing protein C2"/>
    <property type="match status" value="1"/>
</dbReference>
<dbReference type="Gene3D" id="2.40.50.140">
    <property type="entry name" value="Nucleic acid-binding proteins"/>
    <property type="match status" value="1"/>
</dbReference>
<dbReference type="InterPro" id="IPR052069">
    <property type="entry name" value="Ca-reg_mRNA-binding_domain"/>
</dbReference>
<dbReference type="InterPro" id="IPR011129">
    <property type="entry name" value="CSD"/>
</dbReference>
<dbReference type="InterPro" id="IPR019844">
    <property type="entry name" value="CSD_CS"/>
</dbReference>
<dbReference type="InterPro" id="IPR002059">
    <property type="entry name" value="CSP_DNA-bd"/>
</dbReference>
<dbReference type="InterPro" id="IPR012340">
    <property type="entry name" value="NA-bd_OB-fold"/>
</dbReference>
<dbReference type="PANTHER" id="PTHR12962">
    <property type="entry name" value="CALCIUM-REGULATED HEAT STABLE PROTEIN CRHSP-24-RELATED"/>
    <property type="match status" value="1"/>
</dbReference>
<dbReference type="PANTHER" id="PTHR12962:SF3">
    <property type="entry name" value="CALCIUM-REGULATED HEAT-STABLE PROTEIN 1"/>
    <property type="match status" value="1"/>
</dbReference>
<dbReference type="Pfam" id="PF00313">
    <property type="entry name" value="CSD"/>
    <property type="match status" value="1"/>
</dbReference>
<dbReference type="SMART" id="SM00357">
    <property type="entry name" value="CSP"/>
    <property type="match status" value="1"/>
</dbReference>
<dbReference type="SUPFAM" id="SSF50249">
    <property type="entry name" value="Nucleic acid-binding proteins"/>
    <property type="match status" value="1"/>
</dbReference>
<dbReference type="PROSITE" id="PS00352">
    <property type="entry name" value="CSD_1"/>
    <property type="match status" value="1"/>
</dbReference>
<dbReference type="PROSITE" id="PS51857">
    <property type="entry name" value="CSD_2"/>
    <property type="match status" value="1"/>
</dbReference>
<accession>Q9Y2V2</accession>
<accession>B2R4C3</accession>
<accession>D3DUF5</accession>
<accession>Q2YDX5</accession>
<accession>Q9BQ53</accession>
<name>CHSP1_HUMAN</name>